<protein>
    <recommendedName>
        <fullName evidence="1">Ribose-5-phosphate isomerase A</fullName>
        <ecNumber evidence="1">5.3.1.6</ecNumber>
    </recommendedName>
    <alternativeName>
        <fullName evidence="1">Phosphoriboisomerase A</fullName>
        <shortName evidence="1">PRI</shortName>
    </alternativeName>
</protein>
<evidence type="ECO:0000255" key="1">
    <source>
        <dbReference type="HAMAP-Rule" id="MF_00170"/>
    </source>
</evidence>
<reference key="1">
    <citation type="journal article" date="2005" name="J. Bacteriol.">
        <title>Whole-genome sequencing of Staphylococcus haemolyticus uncovers the extreme plasticity of its genome and the evolution of human-colonizing staphylococcal species.</title>
        <authorList>
            <person name="Takeuchi F."/>
            <person name="Watanabe S."/>
            <person name="Baba T."/>
            <person name="Yuzawa H."/>
            <person name="Ito T."/>
            <person name="Morimoto Y."/>
            <person name="Kuroda M."/>
            <person name="Cui L."/>
            <person name="Takahashi M."/>
            <person name="Ankai A."/>
            <person name="Baba S."/>
            <person name="Fukui S."/>
            <person name="Lee J.C."/>
            <person name="Hiramatsu K."/>
        </authorList>
    </citation>
    <scope>NUCLEOTIDE SEQUENCE [LARGE SCALE GENOMIC DNA]</scope>
    <source>
        <strain>JCSC1435</strain>
    </source>
</reference>
<gene>
    <name evidence="1" type="primary">rpiA</name>
    <name type="ordered locus">SH0720</name>
</gene>
<name>RPIA_STAHJ</name>
<keyword id="KW-0413">Isomerase</keyword>
<feature type="chain" id="PRO_1000017005" description="Ribose-5-phosphate isomerase A">
    <location>
        <begin position="1"/>
        <end position="230"/>
    </location>
</feature>
<feature type="active site" description="Proton acceptor" evidence="1">
    <location>
        <position position="107"/>
    </location>
</feature>
<feature type="binding site" evidence="1">
    <location>
        <begin position="29"/>
        <end position="32"/>
    </location>
    <ligand>
        <name>substrate</name>
    </ligand>
</feature>
<feature type="binding site" evidence="1">
    <location>
        <begin position="85"/>
        <end position="88"/>
    </location>
    <ligand>
        <name>substrate</name>
    </ligand>
</feature>
<feature type="binding site" evidence="1">
    <location>
        <begin position="98"/>
        <end position="101"/>
    </location>
    <ligand>
        <name>substrate</name>
    </ligand>
</feature>
<feature type="binding site" evidence="1">
    <location>
        <position position="125"/>
    </location>
    <ligand>
        <name>substrate</name>
    </ligand>
</feature>
<dbReference type="EC" id="5.3.1.6" evidence="1"/>
<dbReference type="EMBL" id="AP006716">
    <property type="protein sequence ID" value="BAE04029.1"/>
    <property type="molecule type" value="Genomic_DNA"/>
</dbReference>
<dbReference type="RefSeq" id="WP_011275045.1">
    <property type="nucleotide sequence ID" value="NC_007168.1"/>
</dbReference>
<dbReference type="SMR" id="Q4L8J6"/>
<dbReference type="KEGG" id="sha:SH0720"/>
<dbReference type="eggNOG" id="COG0120">
    <property type="taxonomic scope" value="Bacteria"/>
</dbReference>
<dbReference type="HOGENOM" id="CLU_056590_1_1_9"/>
<dbReference type="OrthoDB" id="5870696at2"/>
<dbReference type="UniPathway" id="UPA00115">
    <property type="reaction ID" value="UER00412"/>
</dbReference>
<dbReference type="Proteomes" id="UP000000543">
    <property type="component" value="Chromosome"/>
</dbReference>
<dbReference type="GO" id="GO:0005829">
    <property type="term" value="C:cytosol"/>
    <property type="evidence" value="ECO:0007669"/>
    <property type="project" value="TreeGrafter"/>
</dbReference>
<dbReference type="GO" id="GO:0004751">
    <property type="term" value="F:ribose-5-phosphate isomerase activity"/>
    <property type="evidence" value="ECO:0007669"/>
    <property type="project" value="UniProtKB-UniRule"/>
</dbReference>
<dbReference type="GO" id="GO:0006014">
    <property type="term" value="P:D-ribose metabolic process"/>
    <property type="evidence" value="ECO:0007669"/>
    <property type="project" value="TreeGrafter"/>
</dbReference>
<dbReference type="GO" id="GO:0009052">
    <property type="term" value="P:pentose-phosphate shunt, non-oxidative branch"/>
    <property type="evidence" value="ECO:0007669"/>
    <property type="project" value="UniProtKB-UniRule"/>
</dbReference>
<dbReference type="CDD" id="cd01398">
    <property type="entry name" value="RPI_A"/>
    <property type="match status" value="1"/>
</dbReference>
<dbReference type="FunFam" id="3.40.50.1360:FF:000001">
    <property type="entry name" value="Ribose-5-phosphate isomerase A"/>
    <property type="match status" value="1"/>
</dbReference>
<dbReference type="Gene3D" id="3.30.70.260">
    <property type="match status" value="1"/>
</dbReference>
<dbReference type="Gene3D" id="3.40.50.1360">
    <property type="match status" value="1"/>
</dbReference>
<dbReference type="HAMAP" id="MF_00170">
    <property type="entry name" value="Rib_5P_isom_A"/>
    <property type="match status" value="1"/>
</dbReference>
<dbReference type="InterPro" id="IPR037171">
    <property type="entry name" value="NagB/RpiA_transferase-like"/>
</dbReference>
<dbReference type="InterPro" id="IPR020672">
    <property type="entry name" value="Ribose5P_isomerase_typA_subgr"/>
</dbReference>
<dbReference type="InterPro" id="IPR004788">
    <property type="entry name" value="Ribose5P_isomerase_type_A"/>
</dbReference>
<dbReference type="NCBIfam" id="NF001924">
    <property type="entry name" value="PRK00702.1"/>
    <property type="match status" value="1"/>
</dbReference>
<dbReference type="NCBIfam" id="NF010585">
    <property type="entry name" value="PRK13978.1"/>
    <property type="match status" value="1"/>
</dbReference>
<dbReference type="NCBIfam" id="TIGR00021">
    <property type="entry name" value="rpiA"/>
    <property type="match status" value="1"/>
</dbReference>
<dbReference type="PANTHER" id="PTHR11934">
    <property type="entry name" value="RIBOSE-5-PHOSPHATE ISOMERASE"/>
    <property type="match status" value="1"/>
</dbReference>
<dbReference type="PANTHER" id="PTHR11934:SF0">
    <property type="entry name" value="RIBOSE-5-PHOSPHATE ISOMERASE"/>
    <property type="match status" value="1"/>
</dbReference>
<dbReference type="Pfam" id="PF06026">
    <property type="entry name" value="Rib_5-P_isom_A"/>
    <property type="match status" value="1"/>
</dbReference>
<dbReference type="SUPFAM" id="SSF75445">
    <property type="entry name" value="D-ribose-5-phosphate isomerase (RpiA), lid domain"/>
    <property type="match status" value="1"/>
</dbReference>
<dbReference type="SUPFAM" id="SSF100950">
    <property type="entry name" value="NagB/RpiA/CoA transferase-like"/>
    <property type="match status" value="1"/>
</dbReference>
<sequence>MKDSKELKIMTVDDAVAQIEDNMVLGIGTGSTIELLIPKLAERIHKEQLNITGVCTSNKSAFIAKKLDINVVDINDVGHVDLAIDGADEVDVNINLIKGGGGALFREKVIDEMAHRFVVLADESKLVNYLGESFKLPVEVDKFNWFHIAKKIEAFDDIITERRMSDDVPFITDNGNYILDCQLNKQIDPYQFHEYLIHLTGVLETGYFLNITDQVIVGTQDGVKIINKSN</sequence>
<organism>
    <name type="scientific">Staphylococcus haemolyticus (strain JCSC1435)</name>
    <dbReference type="NCBI Taxonomy" id="279808"/>
    <lineage>
        <taxon>Bacteria</taxon>
        <taxon>Bacillati</taxon>
        <taxon>Bacillota</taxon>
        <taxon>Bacilli</taxon>
        <taxon>Bacillales</taxon>
        <taxon>Staphylococcaceae</taxon>
        <taxon>Staphylococcus</taxon>
    </lineage>
</organism>
<accession>Q4L8J6</accession>
<comment type="function">
    <text evidence="1">Catalyzes the reversible conversion of ribose-5-phosphate to ribulose 5-phosphate.</text>
</comment>
<comment type="catalytic activity">
    <reaction evidence="1">
        <text>aldehydo-D-ribose 5-phosphate = D-ribulose 5-phosphate</text>
        <dbReference type="Rhea" id="RHEA:14657"/>
        <dbReference type="ChEBI" id="CHEBI:58121"/>
        <dbReference type="ChEBI" id="CHEBI:58273"/>
        <dbReference type="EC" id="5.3.1.6"/>
    </reaction>
</comment>
<comment type="pathway">
    <text evidence="1">Carbohydrate degradation; pentose phosphate pathway; D-ribose 5-phosphate from D-ribulose 5-phosphate (non-oxidative stage): step 1/1.</text>
</comment>
<comment type="subunit">
    <text evidence="1">Homodimer.</text>
</comment>
<comment type="similarity">
    <text evidence="1">Belongs to the ribose 5-phosphate isomerase family.</text>
</comment>
<proteinExistence type="inferred from homology"/>